<accession>P18020</accession>
<protein>
    <recommendedName>
        <fullName>Uncharacterized 38.4 kDa protein</fullName>
    </recommendedName>
    <alternativeName>
        <fullName>ORF10</fullName>
    </alternativeName>
</protein>
<name>YPIX_CLOPF</name>
<feature type="chain" id="PRO_0000208254" description="Uncharacterized 38.4 kDa protein">
    <location>
        <begin position="1"/>
        <end position="342"/>
    </location>
</feature>
<feature type="domain" description="MurNAc-LAA" evidence="1">
    <location>
        <begin position="3"/>
        <end position="173"/>
    </location>
</feature>
<proteinExistence type="predicted"/>
<dbReference type="EMBL" id="M32882">
    <property type="protein sequence ID" value="AAA98256.1"/>
    <property type="molecule type" value="Genomic_DNA"/>
</dbReference>
<dbReference type="PIR" id="JT0370">
    <property type="entry name" value="JT0370"/>
</dbReference>
<dbReference type="RefSeq" id="NP_040458.1">
    <property type="nucleotide sequence ID" value="NC_001388.1"/>
</dbReference>
<dbReference type="RefSeq" id="WP_010889930.1">
    <property type="nucleotide sequence ID" value="NC_001388.1"/>
</dbReference>
<dbReference type="SMR" id="P18020"/>
<dbReference type="GO" id="GO:0030288">
    <property type="term" value="C:outer membrane-bounded periplasmic space"/>
    <property type="evidence" value="ECO:0007669"/>
    <property type="project" value="TreeGrafter"/>
</dbReference>
<dbReference type="GO" id="GO:0008745">
    <property type="term" value="F:N-acetylmuramoyl-L-alanine amidase activity"/>
    <property type="evidence" value="ECO:0007669"/>
    <property type="project" value="InterPro"/>
</dbReference>
<dbReference type="GO" id="GO:0009253">
    <property type="term" value="P:peptidoglycan catabolic process"/>
    <property type="evidence" value="ECO:0007669"/>
    <property type="project" value="InterPro"/>
</dbReference>
<dbReference type="CDD" id="cd02696">
    <property type="entry name" value="MurNAc-LAA"/>
    <property type="match status" value="1"/>
</dbReference>
<dbReference type="Gene3D" id="3.40.630.40">
    <property type="entry name" value="Zn-dependent exopeptidases"/>
    <property type="match status" value="1"/>
</dbReference>
<dbReference type="InterPro" id="IPR002508">
    <property type="entry name" value="MurNAc-LAA_cat"/>
</dbReference>
<dbReference type="InterPro" id="IPR050695">
    <property type="entry name" value="N-acetylmuramoyl_amidase_3"/>
</dbReference>
<dbReference type="PANTHER" id="PTHR30404:SF8">
    <property type="entry name" value="AUTOLYSIN PH-RELATED"/>
    <property type="match status" value="1"/>
</dbReference>
<dbReference type="PANTHER" id="PTHR30404">
    <property type="entry name" value="N-ACETYLMURAMOYL-L-ALANINE AMIDASE"/>
    <property type="match status" value="1"/>
</dbReference>
<dbReference type="Pfam" id="PF01520">
    <property type="entry name" value="Amidase_3"/>
    <property type="match status" value="1"/>
</dbReference>
<dbReference type="SMART" id="SM00646">
    <property type="entry name" value="Ami_3"/>
    <property type="match status" value="1"/>
</dbReference>
<dbReference type="SUPFAM" id="SSF53187">
    <property type="entry name" value="Zn-dependent exopeptidases"/>
    <property type="match status" value="1"/>
</dbReference>
<evidence type="ECO:0000255" key="1"/>
<evidence type="ECO:0000305" key="2"/>
<comment type="similarity">
    <text evidence="2">To C.perfringens CPE1502.</text>
</comment>
<organism>
    <name type="scientific">Clostridium perfringens</name>
    <dbReference type="NCBI Taxonomy" id="1502"/>
    <lineage>
        <taxon>Bacteria</taxon>
        <taxon>Bacillati</taxon>
        <taxon>Bacillota</taxon>
        <taxon>Clostridia</taxon>
        <taxon>Eubacteriales</taxon>
        <taxon>Clostridiaceae</taxon>
        <taxon>Clostridium</taxon>
    </lineage>
</organism>
<reference key="1">
    <citation type="journal article" date="1988" name="Plasmid">
        <title>Complete nucleotide sequence and genetic organization of the bacteriocinogenic plasmid, pIP404, from Clostridium perfringens.</title>
        <authorList>
            <person name="Garnier T."/>
            <person name="Cole S.T."/>
        </authorList>
    </citation>
    <scope>NUCLEOTIDE SEQUENCE [GENOMIC DNA]</scope>
    <source>
        <strain>CPN50</strain>
    </source>
</reference>
<sequence>MKIAIRGGHNFLAKGACGLIDETIEDRKVYKAVIKNLIENNFEVLDVTPGDCDINTDLKLGVDKANNFNADLFISIHFDKCYDKFDGPLGTGTWVCEKGGKAEIYAQNIVDTISEGTSLKNRGVKTNAKLYELNKTIMPAVIVEVCFCESKVDVDIYREKGSDLIGYLIAKGICKSVNKEISSDLPQVNLENTTNSQNNNLFKTNATAKVALDPRDNPSNNYKDLGEIYENERIKILAEVCDLKFFLPATYWQDSLNKESSPIWVNSKQTVLNVDTNATVINVLTELDARYTPSPDSNRMGYVKNQERLFVHKIENNYALATYLASEGYKTAWFTAEYIKLD</sequence>
<geneLocation type="plasmid">
    <name>pIP404</name>
</geneLocation>
<keyword id="KW-0614">Plasmid</keyword>